<gene>
    <name type="primary">PXMP4</name>
    <name type="synonym">PMP24</name>
</gene>
<proteinExistence type="evidence at protein level"/>
<keyword id="KW-0025">Alternative splicing</keyword>
<keyword id="KW-0325">Glycoprotein</keyword>
<keyword id="KW-0472">Membrane</keyword>
<keyword id="KW-0576">Peroxisome</keyword>
<keyword id="KW-1267">Proteomics identification</keyword>
<keyword id="KW-1185">Reference proteome</keyword>
<keyword id="KW-0812">Transmembrane</keyword>
<keyword id="KW-1133">Transmembrane helix</keyword>
<protein>
    <recommendedName>
        <fullName>Peroxisomal membrane protein 4</fullName>
    </recommendedName>
    <alternativeName>
        <fullName>24 kDa peroxisomal intrinsic membrane protein</fullName>
    </alternativeName>
</protein>
<dbReference type="EMBL" id="AF072864">
    <property type="protein sequence ID" value="AAD43195.1"/>
    <property type="molecule type" value="mRNA"/>
</dbReference>
<dbReference type="EMBL" id="AL136648">
    <property type="protein sequence ID" value="CAB66583.1"/>
    <property type="molecule type" value="mRNA"/>
</dbReference>
<dbReference type="EMBL" id="AK297018">
    <property type="status" value="NOT_ANNOTATED_CDS"/>
    <property type="molecule type" value="mRNA"/>
</dbReference>
<dbReference type="EMBL" id="AL050349">
    <property type="status" value="NOT_ANNOTATED_CDS"/>
    <property type="molecule type" value="Genomic_DNA"/>
</dbReference>
<dbReference type="EMBL" id="BC001147">
    <property type="protein sequence ID" value="AAH01147.1"/>
    <property type="molecule type" value="mRNA"/>
</dbReference>
<dbReference type="CCDS" id="CCDS13225.1">
    <molecule id="Q9Y6I8-1"/>
</dbReference>
<dbReference type="CCDS" id="CCDS13226.1">
    <molecule id="Q9Y6I8-2"/>
</dbReference>
<dbReference type="RefSeq" id="NP_009169.3">
    <molecule id="Q9Y6I8-1"/>
    <property type="nucleotide sequence ID" value="NM_007238.4"/>
</dbReference>
<dbReference type="RefSeq" id="NP_899634.1">
    <molecule id="Q9Y6I8-2"/>
    <property type="nucleotide sequence ID" value="NM_183397.3"/>
</dbReference>
<dbReference type="BioGRID" id="116423">
    <property type="interactions" value="4"/>
</dbReference>
<dbReference type="FunCoup" id="Q9Y6I8">
    <property type="interactions" value="266"/>
</dbReference>
<dbReference type="IntAct" id="Q9Y6I8">
    <property type="interactions" value="3"/>
</dbReference>
<dbReference type="STRING" id="9606.ENSP00000386385"/>
<dbReference type="TCDB" id="1.B.69.1.1">
    <property type="family name" value="the peroxysomal membrane porin 4 (pxmp4) family"/>
</dbReference>
<dbReference type="GlyCosmos" id="Q9Y6I8">
    <property type="glycosylation" value="2 sites, No reported glycans"/>
</dbReference>
<dbReference type="GlyGen" id="Q9Y6I8">
    <property type="glycosylation" value="2 sites"/>
</dbReference>
<dbReference type="iPTMnet" id="Q9Y6I8"/>
<dbReference type="PhosphoSitePlus" id="Q9Y6I8"/>
<dbReference type="BioMuta" id="PXMP4"/>
<dbReference type="DMDM" id="29840804"/>
<dbReference type="jPOST" id="Q9Y6I8"/>
<dbReference type="MassIVE" id="Q9Y6I8"/>
<dbReference type="PaxDb" id="9606-ENSP00000386385"/>
<dbReference type="PeptideAtlas" id="Q9Y6I8"/>
<dbReference type="ProteomicsDB" id="86696">
    <molecule id="Q9Y6I8-1"/>
</dbReference>
<dbReference type="ProteomicsDB" id="86697">
    <molecule id="Q9Y6I8-2"/>
</dbReference>
<dbReference type="Pumba" id="Q9Y6I8"/>
<dbReference type="Antibodypedia" id="54645">
    <property type="antibodies" value="128 antibodies from 22 providers"/>
</dbReference>
<dbReference type="DNASU" id="11264"/>
<dbReference type="Ensembl" id="ENST00000344022.7">
    <molecule id="Q9Y6I8-2"/>
    <property type="protein sequence ID" value="ENSP00000343071.3"/>
    <property type="gene ID" value="ENSG00000101417.12"/>
</dbReference>
<dbReference type="Ensembl" id="ENST00000409299.8">
    <molecule id="Q9Y6I8-1"/>
    <property type="protein sequence ID" value="ENSP00000386385.3"/>
    <property type="gene ID" value="ENSG00000101417.12"/>
</dbReference>
<dbReference type="GeneID" id="11264"/>
<dbReference type="KEGG" id="hsa:11264"/>
<dbReference type="MANE-Select" id="ENST00000409299.8">
    <property type="protein sequence ID" value="ENSP00000386385.3"/>
    <property type="RefSeq nucleotide sequence ID" value="NM_007238.5"/>
    <property type="RefSeq protein sequence ID" value="NP_009169.3"/>
</dbReference>
<dbReference type="UCSC" id="uc002wzv.4">
    <molecule id="Q9Y6I8-1"/>
    <property type="organism name" value="human"/>
</dbReference>
<dbReference type="AGR" id="HGNC:15920"/>
<dbReference type="CTD" id="11264"/>
<dbReference type="DisGeNET" id="11264"/>
<dbReference type="GeneCards" id="PXMP4"/>
<dbReference type="HGNC" id="HGNC:15920">
    <property type="gene designation" value="PXMP4"/>
</dbReference>
<dbReference type="HPA" id="ENSG00000101417">
    <property type="expression patterns" value="Low tissue specificity"/>
</dbReference>
<dbReference type="MIM" id="616397">
    <property type="type" value="gene"/>
</dbReference>
<dbReference type="neXtProt" id="NX_Q9Y6I8"/>
<dbReference type="OpenTargets" id="ENSG00000101417"/>
<dbReference type="PharmGKB" id="PA34061"/>
<dbReference type="VEuPathDB" id="HostDB:ENSG00000101417"/>
<dbReference type="eggNOG" id="ENOG502RXMH">
    <property type="taxonomic scope" value="Eukaryota"/>
</dbReference>
<dbReference type="GeneTree" id="ENSGT00390000001562"/>
<dbReference type="HOGENOM" id="CLU_054132_1_0_1"/>
<dbReference type="InParanoid" id="Q9Y6I8"/>
<dbReference type="OMA" id="VMVFLFR"/>
<dbReference type="OrthoDB" id="39659at2759"/>
<dbReference type="PAN-GO" id="Q9Y6I8">
    <property type="GO annotations" value="1 GO annotation based on evolutionary models"/>
</dbReference>
<dbReference type="PhylomeDB" id="Q9Y6I8"/>
<dbReference type="TreeFam" id="TF105313"/>
<dbReference type="PathwayCommons" id="Q9Y6I8"/>
<dbReference type="Reactome" id="R-HSA-9603798">
    <property type="pathway name" value="Class I peroxisomal membrane protein import"/>
</dbReference>
<dbReference type="SignaLink" id="Q9Y6I8"/>
<dbReference type="BioGRID-ORCS" id="11264">
    <property type="hits" value="15 hits in 1158 CRISPR screens"/>
</dbReference>
<dbReference type="ChiTaRS" id="PXMP4">
    <property type="organism name" value="human"/>
</dbReference>
<dbReference type="GeneWiki" id="PXMP4"/>
<dbReference type="GenomeRNAi" id="11264"/>
<dbReference type="Pharos" id="Q9Y6I8">
    <property type="development level" value="Tbio"/>
</dbReference>
<dbReference type="PRO" id="PR:Q9Y6I8"/>
<dbReference type="Proteomes" id="UP000005640">
    <property type="component" value="Chromosome 20"/>
</dbReference>
<dbReference type="RNAct" id="Q9Y6I8">
    <property type="molecule type" value="protein"/>
</dbReference>
<dbReference type="Bgee" id="ENSG00000101417">
    <property type="expression patterns" value="Expressed in upper leg skin and 156 other cell types or tissues"/>
</dbReference>
<dbReference type="ExpressionAtlas" id="Q9Y6I8">
    <property type="expression patterns" value="baseline and differential"/>
</dbReference>
<dbReference type="GO" id="GO:0005829">
    <property type="term" value="C:cytosol"/>
    <property type="evidence" value="ECO:0000304"/>
    <property type="project" value="Reactome"/>
</dbReference>
<dbReference type="GO" id="GO:0005778">
    <property type="term" value="C:peroxisomal membrane"/>
    <property type="evidence" value="ECO:0000314"/>
    <property type="project" value="UniProtKB"/>
</dbReference>
<dbReference type="GO" id="GO:0005777">
    <property type="term" value="C:peroxisome"/>
    <property type="evidence" value="ECO:0000314"/>
    <property type="project" value="LIFEdb"/>
</dbReference>
<dbReference type="GO" id="GO:0046485">
    <property type="term" value="P:ether lipid metabolic process"/>
    <property type="evidence" value="ECO:0007669"/>
    <property type="project" value="Ensembl"/>
</dbReference>
<dbReference type="InterPro" id="IPR019531">
    <property type="entry name" value="Pmp4"/>
</dbReference>
<dbReference type="PANTHER" id="PTHR15460">
    <property type="entry name" value="PEROXISOMAL MEMBRANE PROTEIN 4"/>
    <property type="match status" value="1"/>
</dbReference>
<dbReference type="PANTHER" id="PTHR15460:SF3">
    <property type="entry name" value="PEROXISOMAL MEMBRANE PROTEIN 4"/>
    <property type="match status" value="1"/>
</dbReference>
<dbReference type="Pfam" id="PF02466">
    <property type="entry name" value="Tim17"/>
    <property type="match status" value="1"/>
</dbReference>
<dbReference type="PIRSF" id="PIRSF013674">
    <property type="entry name" value="PXMP4"/>
    <property type="match status" value="1"/>
</dbReference>
<reference key="1">
    <citation type="journal article" date="1999" name="Biochim. Biophys. Acta">
        <title>Identification of a 24 kDa intrinsic membrane protein from mammalian peroxisomes.</title>
        <authorList>
            <person name="Reguenga C."/>
            <person name="Oliveira M.E.M."/>
            <person name="Gouveia A.M.M."/>
            <person name="Eckerskorn C."/>
            <person name="Sa-Miranda C."/>
            <person name="Azevedo J.E."/>
        </authorList>
    </citation>
    <scope>NUCLEOTIDE SEQUENCE [MRNA] (ISOFORM 1)</scope>
    <scope>CHARACTERIZATION</scope>
    <source>
        <tissue>Liver</tissue>
    </source>
</reference>
<reference key="2">
    <citation type="journal article" date="2001" name="Genome Res.">
        <title>Towards a catalog of human genes and proteins: sequencing and analysis of 500 novel complete protein coding human cDNAs.</title>
        <authorList>
            <person name="Wiemann S."/>
            <person name="Weil B."/>
            <person name="Wellenreuther R."/>
            <person name="Gassenhuber J."/>
            <person name="Glassl S."/>
            <person name="Ansorge W."/>
            <person name="Boecher M."/>
            <person name="Bloecker H."/>
            <person name="Bauersachs S."/>
            <person name="Blum H."/>
            <person name="Lauber J."/>
            <person name="Duesterhoeft A."/>
            <person name="Beyer A."/>
            <person name="Koehrer K."/>
            <person name="Strack N."/>
            <person name="Mewes H.-W."/>
            <person name="Ottenwaelder B."/>
            <person name="Obermaier B."/>
            <person name="Tampe J."/>
            <person name="Heubner D."/>
            <person name="Wambutt R."/>
            <person name="Korn B."/>
            <person name="Klein M."/>
            <person name="Poustka A."/>
        </authorList>
    </citation>
    <scope>NUCLEOTIDE SEQUENCE [LARGE SCALE MRNA] (ISOFORM 1)</scope>
    <scope>VARIANT ILE-204</scope>
    <source>
        <tissue>Brain</tissue>
    </source>
</reference>
<reference key="3">
    <citation type="journal article" date="2004" name="Nat. Genet.">
        <title>Complete sequencing and characterization of 21,243 full-length human cDNAs.</title>
        <authorList>
            <person name="Ota T."/>
            <person name="Suzuki Y."/>
            <person name="Nishikawa T."/>
            <person name="Otsuki T."/>
            <person name="Sugiyama T."/>
            <person name="Irie R."/>
            <person name="Wakamatsu A."/>
            <person name="Hayashi K."/>
            <person name="Sato H."/>
            <person name="Nagai K."/>
            <person name="Kimura K."/>
            <person name="Makita H."/>
            <person name="Sekine M."/>
            <person name="Obayashi M."/>
            <person name="Nishi T."/>
            <person name="Shibahara T."/>
            <person name="Tanaka T."/>
            <person name="Ishii S."/>
            <person name="Yamamoto J."/>
            <person name="Saito K."/>
            <person name="Kawai Y."/>
            <person name="Isono Y."/>
            <person name="Nakamura Y."/>
            <person name="Nagahari K."/>
            <person name="Murakami K."/>
            <person name="Yasuda T."/>
            <person name="Iwayanagi T."/>
            <person name="Wagatsuma M."/>
            <person name="Shiratori A."/>
            <person name="Sudo H."/>
            <person name="Hosoiri T."/>
            <person name="Kaku Y."/>
            <person name="Kodaira H."/>
            <person name="Kondo H."/>
            <person name="Sugawara M."/>
            <person name="Takahashi M."/>
            <person name="Kanda K."/>
            <person name="Yokoi T."/>
            <person name="Furuya T."/>
            <person name="Kikkawa E."/>
            <person name="Omura Y."/>
            <person name="Abe K."/>
            <person name="Kamihara K."/>
            <person name="Katsuta N."/>
            <person name="Sato K."/>
            <person name="Tanikawa M."/>
            <person name="Yamazaki M."/>
            <person name="Ninomiya K."/>
            <person name="Ishibashi T."/>
            <person name="Yamashita H."/>
            <person name="Murakawa K."/>
            <person name="Fujimori K."/>
            <person name="Tanai H."/>
            <person name="Kimata M."/>
            <person name="Watanabe M."/>
            <person name="Hiraoka S."/>
            <person name="Chiba Y."/>
            <person name="Ishida S."/>
            <person name="Ono Y."/>
            <person name="Takiguchi S."/>
            <person name="Watanabe S."/>
            <person name="Yosida M."/>
            <person name="Hotuta T."/>
            <person name="Kusano J."/>
            <person name="Kanehori K."/>
            <person name="Takahashi-Fujii A."/>
            <person name="Hara H."/>
            <person name="Tanase T.-O."/>
            <person name="Nomura Y."/>
            <person name="Togiya S."/>
            <person name="Komai F."/>
            <person name="Hara R."/>
            <person name="Takeuchi K."/>
            <person name="Arita M."/>
            <person name="Imose N."/>
            <person name="Musashino K."/>
            <person name="Yuuki H."/>
            <person name="Oshima A."/>
            <person name="Sasaki N."/>
            <person name="Aotsuka S."/>
            <person name="Yoshikawa Y."/>
            <person name="Matsunawa H."/>
            <person name="Ichihara T."/>
            <person name="Shiohata N."/>
            <person name="Sano S."/>
            <person name="Moriya S."/>
            <person name="Momiyama H."/>
            <person name="Satoh N."/>
            <person name="Takami S."/>
            <person name="Terashima Y."/>
            <person name="Suzuki O."/>
            <person name="Nakagawa S."/>
            <person name="Senoh A."/>
            <person name="Mizoguchi H."/>
            <person name="Goto Y."/>
            <person name="Shimizu F."/>
            <person name="Wakebe H."/>
            <person name="Hishigaki H."/>
            <person name="Watanabe T."/>
            <person name="Sugiyama A."/>
            <person name="Takemoto M."/>
            <person name="Kawakami B."/>
            <person name="Yamazaki M."/>
            <person name="Watanabe K."/>
            <person name="Kumagai A."/>
            <person name="Itakura S."/>
            <person name="Fukuzumi Y."/>
            <person name="Fujimori Y."/>
            <person name="Komiyama M."/>
            <person name="Tashiro H."/>
            <person name="Tanigami A."/>
            <person name="Fujiwara T."/>
            <person name="Ono T."/>
            <person name="Yamada K."/>
            <person name="Fujii Y."/>
            <person name="Ozaki K."/>
            <person name="Hirao M."/>
            <person name="Ohmori Y."/>
            <person name="Kawabata A."/>
            <person name="Hikiji T."/>
            <person name="Kobatake N."/>
            <person name="Inagaki H."/>
            <person name="Ikema Y."/>
            <person name="Okamoto S."/>
            <person name="Okitani R."/>
            <person name="Kawakami T."/>
            <person name="Noguchi S."/>
            <person name="Itoh T."/>
            <person name="Shigeta K."/>
            <person name="Senba T."/>
            <person name="Matsumura K."/>
            <person name="Nakajima Y."/>
            <person name="Mizuno T."/>
            <person name="Morinaga M."/>
            <person name="Sasaki M."/>
            <person name="Togashi T."/>
            <person name="Oyama M."/>
            <person name="Hata H."/>
            <person name="Watanabe M."/>
            <person name="Komatsu T."/>
            <person name="Mizushima-Sugano J."/>
            <person name="Satoh T."/>
            <person name="Shirai Y."/>
            <person name="Takahashi Y."/>
            <person name="Nakagawa K."/>
            <person name="Okumura K."/>
            <person name="Nagase T."/>
            <person name="Nomura N."/>
            <person name="Kikuchi H."/>
            <person name="Masuho Y."/>
            <person name="Yamashita R."/>
            <person name="Nakai K."/>
            <person name="Yada T."/>
            <person name="Nakamura Y."/>
            <person name="Ohara O."/>
            <person name="Isogai T."/>
            <person name="Sugano S."/>
        </authorList>
    </citation>
    <scope>NUCLEOTIDE SEQUENCE [LARGE SCALE MRNA] (ISOFORM 2)</scope>
</reference>
<reference key="4">
    <citation type="journal article" date="2001" name="Nature">
        <title>The DNA sequence and comparative analysis of human chromosome 20.</title>
        <authorList>
            <person name="Deloukas P."/>
            <person name="Matthews L.H."/>
            <person name="Ashurst J.L."/>
            <person name="Burton J."/>
            <person name="Gilbert J.G.R."/>
            <person name="Jones M."/>
            <person name="Stavrides G."/>
            <person name="Almeida J.P."/>
            <person name="Babbage A.K."/>
            <person name="Bagguley C.L."/>
            <person name="Bailey J."/>
            <person name="Barlow K.F."/>
            <person name="Bates K.N."/>
            <person name="Beard L.M."/>
            <person name="Beare D.M."/>
            <person name="Beasley O.P."/>
            <person name="Bird C.P."/>
            <person name="Blakey S.E."/>
            <person name="Bridgeman A.M."/>
            <person name="Brown A.J."/>
            <person name="Buck D."/>
            <person name="Burrill W.D."/>
            <person name="Butler A.P."/>
            <person name="Carder C."/>
            <person name="Carter N.P."/>
            <person name="Chapman J.C."/>
            <person name="Clamp M."/>
            <person name="Clark G."/>
            <person name="Clark L.N."/>
            <person name="Clark S.Y."/>
            <person name="Clee C.M."/>
            <person name="Clegg S."/>
            <person name="Cobley V.E."/>
            <person name="Collier R.E."/>
            <person name="Connor R.E."/>
            <person name="Corby N.R."/>
            <person name="Coulson A."/>
            <person name="Coville G.J."/>
            <person name="Deadman R."/>
            <person name="Dhami P.D."/>
            <person name="Dunn M."/>
            <person name="Ellington A.G."/>
            <person name="Frankland J.A."/>
            <person name="Fraser A."/>
            <person name="French L."/>
            <person name="Garner P."/>
            <person name="Grafham D.V."/>
            <person name="Griffiths C."/>
            <person name="Griffiths M.N.D."/>
            <person name="Gwilliam R."/>
            <person name="Hall R.E."/>
            <person name="Hammond S."/>
            <person name="Harley J.L."/>
            <person name="Heath P.D."/>
            <person name="Ho S."/>
            <person name="Holden J.L."/>
            <person name="Howden P.J."/>
            <person name="Huckle E."/>
            <person name="Hunt A.R."/>
            <person name="Hunt S.E."/>
            <person name="Jekosch K."/>
            <person name="Johnson C.M."/>
            <person name="Johnson D."/>
            <person name="Kay M.P."/>
            <person name="Kimberley A.M."/>
            <person name="King A."/>
            <person name="Knights A."/>
            <person name="Laird G.K."/>
            <person name="Lawlor S."/>
            <person name="Lehvaeslaiho M.H."/>
            <person name="Leversha M.A."/>
            <person name="Lloyd C."/>
            <person name="Lloyd D.M."/>
            <person name="Lovell J.D."/>
            <person name="Marsh V.L."/>
            <person name="Martin S.L."/>
            <person name="McConnachie L.J."/>
            <person name="McLay K."/>
            <person name="McMurray A.A."/>
            <person name="Milne S.A."/>
            <person name="Mistry D."/>
            <person name="Moore M.J.F."/>
            <person name="Mullikin J.C."/>
            <person name="Nickerson T."/>
            <person name="Oliver K."/>
            <person name="Parker A."/>
            <person name="Patel R."/>
            <person name="Pearce T.A.V."/>
            <person name="Peck A.I."/>
            <person name="Phillimore B.J.C.T."/>
            <person name="Prathalingam S.R."/>
            <person name="Plumb R.W."/>
            <person name="Ramsay H."/>
            <person name="Rice C.M."/>
            <person name="Ross M.T."/>
            <person name="Scott C.E."/>
            <person name="Sehra H.K."/>
            <person name="Shownkeen R."/>
            <person name="Sims S."/>
            <person name="Skuce C.D."/>
            <person name="Smith M.L."/>
            <person name="Soderlund C."/>
            <person name="Steward C.A."/>
            <person name="Sulston J.E."/>
            <person name="Swann R.M."/>
            <person name="Sycamore N."/>
            <person name="Taylor R."/>
            <person name="Tee L."/>
            <person name="Thomas D.W."/>
            <person name="Thorpe A."/>
            <person name="Tracey A."/>
            <person name="Tromans A.C."/>
            <person name="Vaudin M."/>
            <person name="Wall M."/>
            <person name="Wallis J.M."/>
            <person name="Whitehead S.L."/>
            <person name="Whittaker P."/>
            <person name="Willey D.L."/>
            <person name="Williams L."/>
            <person name="Williams S.A."/>
            <person name="Wilming L."/>
            <person name="Wray P.W."/>
            <person name="Hubbard T."/>
            <person name="Durbin R.M."/>
            <person name="Bentley D.R."/>
            <person name="Beck S."/>
            <person name="Rogers J."/>
        </authorList>
    </citation>
    <scope>NUCLEOTIDE SEQUENCE [LARGE SCALE GENOMIC DNA]</scope>
</reference>
<reference key="5">
    <citation type="journal article" date="2004" name="Genome Res.">
        <title>The status, quality, and expansion of the NIH full-length cDNA project: the Mammalian Gene Collection (MGC).</title>
        <authorList>
            <consortium name="The MGC Project Team"/>
        </authorList>
    </citation>
    <scope>NUCLEOTIDE SEQUENCE [LARGE SCALE MRNA] (ISOFORM 1)</scope>
    <scope>VARIANT ILE-204</scope>
    <source>
        <tissue>Lung</tissue>
    </source>
</reference>
<reference key="6">
    <citation type="journal article" date="2000" name="J. Cell Biol.">
        <title>PEX19 binds multiple peroxisomal membrane proteins, is predominantly cytoplasmic, and is required for peroxisome membrane synthesis.</title>
        <authorList>
            <person name="Sacksteder K.A."/>
            <person name="Jones J.M."/>
            <person name="South S.T."/>
            <person name="Li X."/>
            <person name="Liu Y."/>
            <person name="Gould S.J."/>
        </authorList>
    </citation>
    <scope>INTERACTION WITH PEX19</scope>
</reference>
<reference key="7">
    <citation type="journal article" date="2004" name="J. Cell Biol.">
        <title>PEX19 is a predominantly cytosolic chaperone and import receptor for class 1 peroxisomal membrane proteins.</title>
        <authorList>
            <person name="Jones J.M."/>
            <person name="Morrell J.C."/>
            <person name="Gould S.J."/>
        </authorList>
    </citation>
    <scope>INTERACTION WITH PEX19</scope>
</reference>
<reference key="8">
    <citation type="journal article" date="2004" name="Oncogene">
        <title>PMP24, a gene identified by MSRF, undergoes DNA hypermethylation-associated gene silencing during cancer progression in an LNCaP model.</title>
        <authorList>
            <person name="Wu M."/>
            <person name="Ho S.M."/>
        </authorList>
    </citation>
    <scope>TISSUE SPECIFICITY</scope>
    <scope>HYPERMETHYLATION</scope>
    <scope>INVOLVEMENT IN PROSTATE CANCER</scope>
</reference>
<reference key="9">
    <citation type="journal article" date="2010" name="Prostate">
        <title>Methylation of a single intronic CpG mediates expression silencing of the PMP24 gene in prostate cancer.</title>
        <authorList>
            <person name="Zhang X."/>
            <person name="Wu M."/>
            <person name="Xiao H."/>
            <person name="Lee M.T."/>
            <person name="Levin L."/>
            <person name="Leung Y.K."/>
            <person name="Ho S.M."/>
        </authorList>
    </citation>
    <scope>HYPERMETHYLATION</scope>
    <scope>INVOLVEMENT IN PROSTATE CANCER</scope>
</reference>
<feature type="chain" id="PRO_0000218932" description="Peroxisomal membrane protein 4">
    <location>
        <begin position="1"/>
        <end position="212"/>
    </location>
</feature>
<feature type="transmembrane region" description="Helical" evidence="2">
    <location>
        <begin position="97"/>
        <end position="117"/>
    </location>
</feature>
<feature type="transmembrane region" description="Helical" evidence="2">
    <location>
        <begin position="153"/>
        <end position="173"/>
    </location>
</feature>
<feature type="glycosylation site" description="N-linked (GlcNAc...) asparagine" evidence="2">
    <location>
        <position position="57"/>
    </location>
</feature>
<feature type="glycosylation site" description="N-linked (GlcNAc...) asparagine" evidence="2">
    <location>
        <position position="206"/>
    </location>
</feature>
<feature type="splice variant" id="VSP_041217" description="In isoform 2." evidence="8">
    <original>SLQEKLWAILQAT</original>
    <variation>RSTCTCCHASCLP</variation>
    <location>
        <begin position="59"/>
        <end position="71"/>
    </location>
</feature>
<feature type="splice variant" id="VSP_041218" description="In isoform 2." evidence="8">
    <location>
        <begin position="72"/>
        <end position="212"/>
    </location>
</feature>
<feature type="sequence variant" id="VAR_015426" description="In dbSNP:rs910397." evidence="4 7">
    <original>V</original>
    <variation>I</variation>
    <location>
        <position position="204"/>
    </location>
</feature>
<comment type="subunit">
    <text evidence="3 5">Interacts with PEX19.</text>
</comment>
<comment type="subcellular location">
    <subcellularLocation>
        <location evidence="1">Peroxisome membrane</location>
        <topology evidence="1">Multi-pass membrane protein</topology>
    </subcellularLocation>
</comment>
<comment type="alternative products">
    <event type="alternative splicing"/>
    <isoform>
        <id>Q9Y6I8-1</id>
        <name>1</name>
        <sequence type="displayed"/>
    </isoform>
    <isoform>
        <id>Q9Y6I8-2</id>
        <name>2</name>
        <sequence type="described" ref="VSP_041217 VSP_041218"/>
    </isoform>
</comment>
<comment type="tissue specificity">
    <text evidence="6">Expressed in normal prostate epithelial cells, and androgen-sensitive prostate adenocarcinoma cells. Not expressed in androgen-insensitive prostate adenocarcinoma cells.</text>
</comment>
<comment type="miscellaneous">
    <text>Hypermethylation-mediated silencing of PXMP4 may be involved in prostate carcinogenesis. PXMP4 undergoes hypermethylation and silencing during the transition of prostate adenocarcinoma cells from androgen dependence to androgen independence.</text>
</comment>
<comment type="similarity">
    <text evidence="9">Belongs to the peroxisomal membrane protein PXMP2/4 family.</text>
</comment>
<comment type="sequence caution" evidence="9">
    <molecule>Isoform 2</molecule>
    <conflict type="miscellaneous discrepancy">
        <sequence resource="EMBL" id="AK297018"/>
    </conflict>
    <text>a conflict in position 70.</text>
</comment>
<evidence type="ECO:0000250" key="1"/>
<evidence type="ECO:0000255" key="2"/>
<evidence type="ECO:0000269" key="3">
    <source>
    </source>
</evidence>
<evidence type="ECO:0000269" key="4">
    <source>
    </source>
</evidence>
<evidence type="ECO:0000269" key="5">
    <source>
    </source>
</evidence>
<evidence type="ECO:0000269" key="6">
    <source>
    </source>
</evidence>
<evidence type="ECO:0000269" key="7">
    <source>
    </source>
</evidence>
<evidence type="ECO:0000303" key="8">
    <source>
    </source>
</evidence>
<evidence type="ECO:0000305" key="9"/>
<accession>Q9Y6I8</accession>
<accession>A2A2I7</accession>
<accession>Q9H0T4</accession>
<name>PXMP4_HUMAN</name>
<sequence length="212" mass="24264">MAAPPQLRALLVVVNALLRKRRYHAALAVLKGFRNGAVYGAKIRAPHALVMTFLFRNGSLQEKLWAILQATYIHSWNLARFVFTYKGLRALQSYIQGKTYPAHAFLAAFLGGILVFGENNNINSQINMYLLSRVLFALSRLAVEKGYIPEPRWDPFPLLTAVVWGLVLWLFEYHRSTLQPSLQSSMTYLYEDSNVWHDISDFLVYNKSRPSN</sequence>
<organism>
    <name type="scientific">Homo sapiens</name>
    <name type="common">Human</name>
    <dbReference type="NCBI Taxonomy" id="9606"/>
    <lineage>
        <taxon>Eukaryota</taxon>
        <taxon>Metazoa</taxon>
        <taxon>Chordata</taxon>
        <taxon>Craniata</taxon>
        <taxon>Vertebrata</taxon>
        <taxon>Euteleostomi</taxon>
        <taxon>Mammalia</taxon>
        <taxon>Eutheria</taxon>
        <taxon>Euarchontoglires</taxon>
        <taxon>Primates</taxon>
        <taxon>Haplorrhini</taxon>
        <taxon>Catarrhini</taxon>
        <taxon>Hominidae</taxon>
        <taxon>Homo</taxon>
    </lineage>
</organism>